<name>CUTC_XANCP</name>
<gene>
    <name evidence="1" type="primary">cutC</name>
    <name type="ordered locus">XCC2913</name>
</gene>
<evidence type="ECO:0000255" key="1">
    <source>
        <dbReference type="HAMAP-Rule" id="MF_00795"/>
    </source>
</evidence>
<sequence length="240" mass="24855">MGLEVAADSVGSALAAQDGGAIRVELCGGLDGGGLTPSFGTLAVVRERLQIPLYVLIRPRVGDFVFDAAEVEVMRRDVEQCVRLGCDGVVLGALDPQGQVDLPAMRALIEAAGTLGVTFHRAIDVSADPARVLEDAITLGCERVLTSGARASALEGVETIAALVRQAGERISIMPGAGVSAANVQALRAGTGAREFHASARGPVAAQVHAPHPYITDLGGDYQRTDVARVRSIVQLLQTA</sequence>
<dbReference type="EMBL" id="AE008922">
    <property type="protein sequence ID" value="AAM42185.1"/>
    <property type="molecule type" value="Genomic_DNA"/>
</dbReference>
<dbReference type="RefSeq" id="NP_638261.1">
    <property type="nucleotide sequence ID" value="NC_003902.1"/>
</dbReference>
<dbReference type="SMR" id="Q8P6Q4"/>
<dbReference type="STRING" id="190485.XCC2913"/>
<dbReference type="EnsemblBacteria" id="AAM42185">
    <property type="protein sequence ID" value="AAM42185"/>
    <property type="gene ID" value="XCC2913"/>
</dbReference>
<dbReference type="KEGG" id="xcc:XCC2913"/>
<dbReference type="PATRIC" id="fig|190485.4.peg.3117"/>
<dbReference type="eggNOG" id="COG3142">
    <property type="taxonomic scope" value="Bacteria"/>
</dbReference>
<dbReference type="HOGENOM" id="CLU_050555_3_1_6"/>
<dbReference type="OrthoDB" id="9815677at2"/>
<dbReference type="Proteomes" id="UP000001010">
    <property type="component" value="Chromosome"/>
</dbReference>
<dbReference type="GO" id="GO:0005737">
    <property type="term" value="C:cytoplasm"/>
    <property type="evidence" value="ECO:0007669"/>
    <property type="project" value="UniProtKB-SubCell"/>
</dbReference>
<dbReference type="GO" id="GO:0005507">
    <property type="term" value="F:copper ion binding"/>
    <property type="evidence" value="ECO:0000318"/>
    <property type="project" value="GO_Central"/>
</dbReference>
<dbReference type="FunFam" id="3.20.20.380:FF:000007">
    <property type="entry name" value="Copper homeostasis protein CutC"/>
    <property type="match status" value="1"/>
</dbReference>
<dbReference type="Gene3D" id="3.20.20.380">
    <property type="entry name" value="Copper homeostasis (CutC) domain"/>
    <property type="match status" value="1"/>
</dbReference>
<dbReference type="HAMAP" id="MF_00795">
    <property type="entry name" value="CutC"/>
    <property type="match status" value="1"/>
</dbReference>
<dbReference type="InterPro" id="IPR005627">
    <property type="entry name" value="CutC-like"/>
</dbReference>
<dbReference type="InterPro" id="IPR036822">
    <property type="entry name" value="CutC-like_dom_sf"/>
</dbReference>
<dbReference type="PANTHER" id="PTHR12598">
    <property type="entry name" value="COPPER HOMEOSTASIS PROTEIN CUTC"/>
    <property type="match status" value="1"/>
</dbReference>
<dbReference type="PANTHER" id="PTHR12598:SF0">
    <property type="entry name" value="COPPER HOMEOSTASIS PROTEIN CUTC HOMOLOG"/>
    <property type="match status" value="1"/>
</dbReference>
<dbReference type="Pfam" id="PF03932">
    <property type="entry name" value="CutC"/>
    <property type="match status" value="1"/>
</dbReference>
<dbReference type="SUPFAM" id="SSF110395">
    <property type="entry name" value="CutC-like"/>
    <property type="match status" value="1"/>
</dbReference>
<proteinExistence type="inferred from homology"/>
<feature type="chain" id="PRO_0000215083" description="PF03932 family protein CutC">
    <location>
        <begin position="1"/>
        <end position="240"/>
    </location>
</feature>
<reference key="1">
    <citation type="journal article" date="2002" name="Nature">
        <title>Comparison of the genomes of two Xanthomonas pathogens with differing host specificities.</title>
        <authorList>
            <person name="da Silva A.C.R."/>
            <person name="Ferro J.A."/>
            <person name="Reinach F.C."/>
            <person name="Farah C.S."/>
            <person name="Furlan L.R."/>
            <person name="Quaggio R.B."/>
            <person name="Monteiro-Vitorello C.B."/>
            <person name="Van Sluys M.A."/>
            <person name="Almeida N.F. Jr."/>
            <person name="Alves L.M.C."/>
            <person name="do Amaral A.M."/>
            <person name="Bertolini M.C."/>
            <person name="Camargo L.E.A."/>
            <person name="Camarotte G."/>
            <person name="Cannavan F."/>
            <person name="Cardozo J."/>
            <person name="Chambergo F."/>
            <person name="Ciapina L.P."/>
            <person name="Cicarelli R.M.B."/>
            <person name="Coutinho L.L."/>
            <person name="Cursino-Santos J.R."/>
            <person name="El-Dorry H."/>
            <person name="Faria J.B."/>
            <person name="Ferreira A.J.S."/>
            <person name="Ferreira R.C.C."/>
            <person name="Ferro M.I.T."/>
            <person name="Formighieri E.F."/>
            <person name="Franco M.C."/>
            <person name="Greggio C.C."/>
            <person name="Gruber A."/>
            <person name="Katsuyama A.M."/>
            <person name="Kishi L.T."/>
            <person name="Leite R.P."/>
            <person name="Lemos E.G.M."/>
            <person name="Lemos M.V.F."/>
            <person name="Locali E.C."/>
            <person name="Machado M.A."/>
            <person name="Madeira A.M.B.N."/>
            <person name="Martinez-Rossi N.M."/>
            <person name="Martins E.C."/>
            <person name="Meidanis J."/>
            <person name="Menck C.F.M."/>
            <person name="Miyaki C.Y."/>
            <person name="Moon D.H."/>
            <person name="Moreira L.M."/>
            <person name="Novo M.T.M."/>
            <person name="Okura V.K."/>
            <person name="Oliveira M.C."/>
            <person name="Oliveira V.R."/>
            <person name="Pereira H.A."/>
            <person name="Rossi A."/>
            <person name="Sena J.A.D."/>
            <person name="Silva C."/>
            <person name="de Souza R.F."/>
            <person name="Spinola L.A.F."/>
            <person name="Takita M.A."/>
            <person name="Tamura R.E."/>
            <person name="Teixeira E.C."/>
            <person name="Tezza R.I.D."/>
            <person name="Trindade dos Santos M."/>
            <person name="Truffi D."/>
            <person name="Tsai S.M."/>
            <person name="White F.F."/>
            <person name="Setubal J.C."/>
            <person name="Kitajima J.P."/>
        </authorList>
    </citation>
    <scope>NUCLEOTIDE SEQUENCE [LARGE SCALE GENOMIC DNA]</scope>
    <source>
        <strain>ATCC 33913 / DSM 3586 / NCPPB 528 / LMG 568 / P 25</strain>
    </source>
</reference>
<comment type="subcellular location">
    <subcellularLocation>
        <location evidence="1">Cytoplasm</location>
    </subcellularLocation>
</comment>
<comment type="similarity">
    <text evidence="1">Belongs to the CutC family.</text>
</comment>
<comment type="caution">
    <text evidence="1">Once thought to be involved in copper homeostasis, experiments in E.coli have shown this is not the case.</text>
</comment>
<keyword id="KW-0963">Cytoplasm</keyword>
<keyword id="KW-1185">Reference proteome</keyword>
<accession>Q8P6Q4</accession>
<protein>
    <recommendedName>
        <fullName evidence="1">PF03932 family protein CutC</fullName>
    </recommendedName>
</protein>
<organism>
    <name type="scientific">Xanthomonas campestris pv. campestris (strain ATCC 33913 / DSM 3586 / NCPPB 528 / LMG 568 / P 25)</name>
    <dbReference type="NCBI Taxonomy" id="190485"/>
    <lineage>
        <taxon>Bacteria</taxon>
        <taxon>Pseudomonadati</taxon>
        <taxon>Pseudomonadota</taxon>
        <taxon>Gammaproteobacteria</taxon>
        <taxon>Lysobacterales</taxon>
        <taxon>Lysobacteraceae</taxon>
        <taxon>Xanthomonas</taxon>
    </lineage>
</organism>